<evidence type="ECO:0000255" key="1">
    <source>
        <dbReference type="HAMAP-Rule" id="MF_01241"/>
    </source>
</evidence>
<dbReference type="EC" id="3.5.99.6" evidence="1"/>
<dbReference type="EMBL" id="CP001341">
    <property type="protein sequence ID" value="ACL40287.1"/>
    <property type="molecule type" value="Genomic_DNA"/>
</dbReference>
<dbReference type="RefSeq" id="WP_015937501.1">
    <property type="nucleotide sequence ID" value="NC_011886.1"/>
</dbReference>
<dbReference type="SMR" id="B8HAX3"/>
<dbReference type="STRING" id="452863.Achl_2322"/>
<dbReference type="KEGG" id="ach:Achl_2322"/>
<dbReference type="eggNOG" id="COG0363">
    <property type="taxonomic scope" value="Bacteria"/>
</dbReference>
<dbReference type="HOGENOM" id="CLU_049611_1_1_11"/>
<dbReference type="OrthoDB" id="9791139at2"/>
<dbReference type="UniPathway" id="UPA00629">
    <property type="reaction ID" value="UER00684"/>
</dbReference>
<dbReference type="Proteomes" id="UP000002505">
    <property type="component" value="Chromosome"/>
</dbReference>
<dbReference type="GO" id="GO:0005737">
    <property type="term" value="C:cytoplasm"/>
    <property type="evidence" value="ECO:0007669"/>
    <property type="project" value="TreeGrafter"/>
</dbReference>
<dbReference type="GO" id="GO:0004342">
    <property type="term" value="F:glucosamine-6-phosphate deaminase activity"/>
    <property type="evidence" value="ECO:0007669"/>
    <property type="project" value="UniProtKB-UniRule"/>
</dbReference>
<dbReference type="GO" id="GO:0042802">
    <property type="term" value="F:identical protein binding"/>
    <property type="evidence" value="ECO:0007669"/>
    <property type="project" value="TreeGrafter"/>
</dbReference>
<dbReference type="GO" id="GO:0005975">
    <property type="term" value="P:carbohydrate metabolic process"/>
    <property type="evidence" value="ECO:0007669"/>
    <property type="project" value="InterPro"/>
</dbReference>
<dbReference type="GO" id="GO:0006043">
    <property type="term" value="P:glucosamine catabolic process"/>
    <property type="evidence" value="ECO:0007669"/>
    <property type="project" value="TreeGrafter"/>
</dbReference>
<dbReference type="GO" id="GO:0006046">
    <property type="term" value="P:N-acetylglucosamine catabolic process"/>
    <property type="evidence" value="ECO:0007669"/>
    <property type="project" value="TreeGrafter"/>
</dbReference>
<dbReference type="GO" id="GO:0019262">
    <property type="term" value="P:N-acetylneuraminate catabolic process"/>
    <property type="evidence" value="ECO:0007669"/>
    <property type="project" value="UniProtKB-UniRule"/>
</dbReference>
<dbReference type="CDD" id="cd01399">
    <property type="entry name" value="GlcN6P_deaminase"/>
    <property type="match status" value="1"/>
</dbReference>
<dbReference type="FunFam" id="3.40.50.1360:FF:000003">
    <property type="entry name" value="Glucosamine-6-phosphate deaminase"/>
    <property type="match status" value="1"/>
</dbReference>
<dbReference type="Gene3D" id="3.40.50.1360">
    <property type="match status" value="1"/>
</dbReference>
<dbReference type="HAMAP" id="MF_01241">
    <property type="entry name" value="GlcN6P_deamin"/>
    <property type="match status" value="1"/>
</dbReference>
<dbReference type="InterPro" id="IPR006148">
    <property type="entry name" value="Glc/Gal-6P_isomerase"/>
</dbReference>
<dbReference type="InterPro" id="IPR004547">
    <property type="entry name" value="Glucosamine6P_isomerase"/>
</dbReference>
<dbReference type="InterPro" id="IPR018321">
    <property type="entry name" value="Glucosamine6P_isomerase_CS"/>
</dbReference>
<dbReference type="InterPro" id="IPR037171">
    <property type="entry name" value="NagB/RpiA_transferase-like"/>
</dbReference>
<dbReference type="NCBIfam" id="TIGR00502">
    <property type="entry name" value="nagB"/>
    <property type="match status" value="1"/>
</dbReference>
<dbReference type="NCBIfam" id="NF001684">
    <property type="entry name" value="PRK00443.1-4"/>
    <property type="match status" value="1"/>
</dbReference>
<dbReference type="PANTHER" id="PTHR11280">
    <property type="entry name" value="GLUCOSAMINE-6-PHOSPHATE ISOMERASE"/>
    <property type="match status" value="1"/>
</dbReference>
<dbReference type="PANTHER" id="PTHR11280:SF5">
    <property type="entry name" value="GLUCOSAMINE-6-PHOSPHATE ISOMERASE"/>
    <property type="match status" value="1"/>
</dbReference>
<dbReference type="Pfam" id="PF01182">
    <property type="entry name" value="Glucosamine_iso"/>
    <property type="match status" value="1"/>
</dbReference>
<dbReference type="SUPFAM" id="SSF100950">
    <property type="entry name" value="NagB/RpiA/CoA transferase-like"/>
    <property type="match status" value="1"/>
</dbReference>
<dbReference type="PROSITE" id="PS01161">
    <property type="entry name" value="GLC_GALNAC_ISOMERASE"/>
    <property type="match status" value="1"/>
</dbReference>
<gene>
    <name evidence="1" type="primary">nagB</name>
    <name type="ordered locus">Achl_2322</name>
</gene>
<comment type="function">
    <text evidence="1">Catalyzes the reversible isomerization-deamination of glucosamine 6-phosphate (GlcN6P) to form fructose 6-phosphate (Fru6P) and ammonium ion.</text>
</comment>
<comment type="catalytic activity">
    <reaction evidence="1">
        <text>alpha-D-glucosamine 6-phosphate + H2O = beta-D-fructose 6-phosphate + NH4(+)</text>
        <dbReference type="Rhea" id="RHEA:12172"/>
        <dbReference type="ChEBI" id="CHEBI:15377"/>
        <dbReference type="ChEBI" id="CHEBI:28938"/>
        <dbReference type="ChEBI" id="CHEBI:57634"/>
        <dbReference type="ChEBI" id="CHEBI:75989"/>
        <dbReference type="EC" id="3.5.99.6"/>
    </reaction>
</comment>
<comment type="pathway">
    <text evidence="1">Amino-sugar metabolism; N-acetylneuraminate degradation; D-fructose 6-phosphate from N-acetylneuraminate: step 5/5.</text>
</comment>
<comment type="similarity">
    <text evidence="1">Belongs to the glucosamine/galactosamine-6-phosphate isomerase family. NagB subfamily.</text>
</comment>
<proteinExistence type="inferred from homology"/>
<feature type="chain" id="PRO_1000165008" description="Glucosamine-6-phosphate deaminase">
    <location>
        <begin position="1"/>
        <end position="259"/>
    </location>
</feature>
<feature type="active site" description="Proton acceptor; for enolization step" evidence="1">
    <location>
        <position position="66"/>
    </location>
</feature>
<feature type="active site" description="For ring-opening step" evidence="1">
    <location>
        <position position="135"/>
    </location>
</feature>
<feature type="active site" description="Proton acceptor; for ring-opening step" evidence="1">
    <location>
        <position position="137"/>
    </location>
</feature>
<feature type="active site" description="For ring-opening step" evidence="1">
    <location>
        <position position="142"/>
    </location>
</feature>
<keyword id="KW-0119">Carbohydrate metabolism</keyword>
<keyword id="KW-0378">Hydrolase</keyword>
<name>NAGB_PSECP</name>
<protein>
    <recommendedName>
        <fullName evidence="1">Glucosamine-6-phosphate deaminase</fullName>
        <ecNumber evidence="1">3.5.99.6</ecNumber>
    </recommendedName>
    <alternativeName>
        <fullName evidence="1">GlcN6P deaminase</fullName>
        <shortName evidence="1">GNPDA</shortName>
    </alternativeName>
    <alternativeName>
        <fullName evidence="1">Glucosamine-6-phosphate isomerase</fullName>
    </alternativeName>
</protein>
<organism>
    <name type="scientific">Pseudarthrobacter chlorophenolicus (strain ATCC 700700 / DSM 12829 / CIP 107037 / JCM 12360 / KCTC 9906 / NCIMB 13794 / A6)</name>
    <name type="common">Arthrobacter chlorophenolicus</name>
    <dbReference type="NCBI Taxonomy" id="452863"/>
    <lineage>
        <taxon>Bacteria</taxon>
        <taxon>Bacillati</taxon>
        <taxon>Actinomycetota</taxon>
        <taxon>Actinomycetes</taxon>
        <taxon>Micrococcales</taxon>
        <taxon>Micrococcaceae</taxon>
        <taxon>Pseudarthrobacter</taxon>
    </lineage>
</organism>
<reference key="1">
    <citation type="submission" date="2009-01" db="EMBL/GenBank/DDBJ databases">
        <title>Complete sequence of chromosome of Arthrobacter chlorophenolicus A6.</title>
        <authorList>
            <consortium name="US DOE Joint Genome Institute"/>
            <person name="Lucas S."/>
            <person name="Copeland A."/>
            <person name="Lapidus A."/>
            <person name="Glavina del Rio T."/>
            <person name="Tice H."/>
            <person name="Bruce D."/>
            <person name="Goodwin L."/>
            <person name="Pitluck S."/>
            <person name="Goltsman E."/>
            <person name="Clum A."/>
            <person name="Larimer F."/>
            <person name="Land M."/>
            <person name="Hauser L."/>
            <person name="Kyrpides N."/>
            <person name="Mikhailova N."/>
            <person name="Jansson J."/>
            <person name="Richardson P."/>
        </authorList>
    </citation>
    <scope>NUCLEOTIDE SEQUENCE [LARGE SCALE GENOMIC DNA]</scope>
    <source>
        <strain>ATCC 700700 / DSM 12829 / CIP 107037 / JCM 12360 / KCTC 9906 / NCIMB 13794 / A6</strain>
    </source>
</reference>
<accession>B8HAX3</accession>
<sequence>MEVVILGGSRPIGKLAADAIEELLRRKPDAVLGLATGSSPLPVYEELAARHATGLDFSRASGFALDEYVGLPDGHPEQYRNVIRREFTDRINIEPANVHSPDGAATDIPAACDAYEAAIAAAGGVDLQLLGVGTDGHIGFNEPGSSFASRTRIKSLIEQTRKDNARFFTSLADVPHHVITQGLGTIMDARHVILIATGAQKAQAVRDFVEGPVAAICPASVLQFHPHATVLVDEAAASALKLADFYRHTYDNKPSWQGI</sequence>